<sequence length="201" mass="22107">MELVLKDAQSALEVSETTFGRDFNEALVHQVVVAYAANARQGTRAQKTRAEVVGSGKKPWRQKGTGRARAGTVKGPIWRGGGVTFAAKAQDHSQKVNKKMYRGALKSIFSELVRQDRLVVVESFGVEAPKTKELKAKLNEMQLEDVLIVTPEVDENLFLAARNLYKVDVRDVAGIDPVSLIAFNKVLVTAEAIKQIEEMLG</sequence>
<gene>
    <name evidence="1" type="primary">rplD</name>
    <name type="ordered locus">swp_2012</name>
</gene>
<organism>
    <name type="scientific">Shewanella piezotolerans (strain WP3 / JCM 13877)</name>
    <dbReference type="NCBI Taxonomy" id="225849"/>
    <lineage>
        <taxon>Bacteria</taxon>
        <taxon>Pseudomonadati</taxon>
        <taxon>Pseudomonadota</taxon>
        <taxon>Gammaproteobacteria</taxon>
        <taxon>Alteromonadales</taxon>
        <taxon>Shewanellaceae</taxon>
        <taxon>Shewanella</taxon>
    </lineage>
</organism>
<name>RL4_SHEPW</name>
<reference key="1">
    <citation type="journal article" date="2008" name="PLoS ONE">
        <title>Environmental adaptation: genomic analysis of the piezotolerant and psychrotolerant deep-sea iron reducing bacterium Shewanella piezotolerans WP3.</title>
        <authorList>
            <person name="Wang F."/>
            <person name="Wang J."/>
            <person name="Jian H."/>
            <person name="Zhang B."/>
            <person name="Li S."/>
            <person name="Wang F."/>
            <person name="Zeng X."/>
            <person name="Gao L."/>
            <person name="Bartlett D.H."/>
            <person name="Yu J."/>
            <person name="Hu S."/>
            <person name="Xiao X."/>
        </authorList>
    </citation>
    <scope>NUCLEOTIDE SEQUENCE [LARGE SCALE GENOMIC DNA]</scope>
    <source>
        <strain>WP3 / JCM 13877</strain>
    </source>
</reference>
<dbReference type="EMBL" id="CP000472">
    <property type="protein sequence ID" value="ACJ28768.1"/>
    <property type="molecule type" value="Genomic_DNA"/>
</dbReference>
<dbReference type="RefSeq" id="WP_020912140.1">
    <property type="nucleotide sequence ID" value="NC_011566.1"/>
</dbReference>
<dbReference type="SMR" id="B8CND4"/>
<dbReference type="STRING" id="225849.swp_2012"/>
<dbReference type="KEGG" id="swp:swp_2012"/>
<dbReference type="eggNOG" id="COG0088">
    <property type="taxonomic scope" value="Bacteria"/>
</dbReference>
<dbReference type="HOGENOM" id="CLU_041575_5_2_6"/>
<dbReference type="OrthoDB" id="9803201at2"/>
<dbReference type="Proteomes" id="UP000000753">
    <property type="component" value="Chromosome"/>
</dbReference>
<dbReference type="GO" id="GO:1990904">
    <property type="term" value="C:ribonucleoprotein complex"/>
    <property type="evidence" value="ECO:0007669"/>
    <property type="project" value="UniProtKB-KW"/>
</dbReference>
<dbReference type="GO" id="GO:0005840">
    <property type="term" value="C:ribosome"/>
    <property type="evidence" value="ECO:0007669"/>
    <property type="project" value="UniProtKB-KW"/>
</dbReference>
<dbReference type="GO" id="GO:0019843">
    <property type="term" value="F:rRNA binding"/>
    <property type="evidence" value="ECO:0007669"/>
    <property type="project" value="UniProtKB-UniRule"/>
</dbReference>
<dbReference type="GO" id="GO:0003735">
    <property type="term" value="F:structural constituent of ribosome"/>
    <property type="evidence" value="ECO:0007669"/>
    <property type="project" value="InterPro"/>
</dbReference>
<dbReference type="GO" id="GO:0006412">
    <property type="term" value="P:translation"/>
    <property type="evidence" value="ECO:0007669"/>
    <property type="project" value="UniProtKB-UniRule"/>
</dbReference>
<dbReference type="FunFam" id="3.40.1370.10:FF:000001">
    <property type="entry name" value="50S ribosomal protein L4"/>
    <property type="match status" value="1"/>
</dbReference>
<dbReference type="Gene3D" id="3.40.1370.10">
    <property type="match status" value="1"/>
</dbReference>
<dbReference type="HAMAP" id="MF_01328_B">
    <property type="entry name" value="Ribosomal_uL4_B"/>
    <property type="match status" value="1"/>
</dbReference>
<dbReference type="InterPro" id="IPR002136">
    <property type="entry name" value="Ribosomal_uL4"/>
</dbReference>
<dbReference type="InterPro" id="IPR013005">
    <property type="entry name" value="Ribosomal_uL4-like"/>
</dbReference>
<dbReference type="InterPro" id="IPR023574">
    <property type="entry name" value="Ribosomal_uL4_dom_sf"/>
</dbReference>
<dbReference type="NCBIfam" id="TIGR03953">
    <property type="entry name" value="rplD_bact"/>
    <property type="match status" value="1"/>
</dbReference>
<dbReference type="PANTHER" id="PTHR10746">
    <property type="entry name" value="50S RIBOSOMAL PROTEIN L4"/>
    <property type="match status" value="1"/>
</dbReference>
<dbReference type="PANTHER" id="PTHR10746:SF6">
    <property type="entry name" value="LARGE RIBOSOMAL SUBUNIT PROTEIN UL4M"/>
    <property type="match status" value="1"/>
</dbReference>
<dbReference type="Pfam" id="PF00573">
    <property type="entry name" value="Ribosomal_L4"/>
    <property type="match status" value="1"/>
</dbReference>
<dbReference type="SUPFAM" id="SSF52166">
    <property type="entry name" value="Ribosomal protein L4"/>
    <property type="match status" value="1"/>
</dbReference>
<accession>B8CND4</accession>
<feature type="chain" id="PRO_1000142186" description="Large ribosomal subunit protein uL4">
    <location>
        <begin position="1"/>
        <end position="201"/>
    </location>
</feature>
<feature type="region of interest" description="Disordered" evidence="2">
    <location>
        <begin position="46"/>
        <end position="71"/>
    </location>
</feature>
<keyword id="KW-0687">Ribonucleoprotein</keyword>
<keyword id="KW-0689">Ribosomal protein</keyword>
<keyword id="KW-0694">RNA-binding</keyword>
<keyword id="KW-0699">rRNA-binding</keyword>
<protein>
    <recommendedName>
        <fullName evidence="1">Large ribosomal subunit protein uL4</fullName>
    </recommendedName>
    <alternativeName>
        <fullName evidence="3">50S ribosomal protein L4</fullName>
    </alternativeName>
</protein>
<comment type="function">
    <text evidence="1">One of the primary rRNA binding proteins, this protein initially binds near the 5'-end of the 23S rRNA. It is important during the early stages of 50S assembly. It makes multiple contacts with different domains of the 23S rRNA in the assembled 50S subunit and ribosome.</text>
</comment>
<comment type="function">
    <text evidence="1">Forms part of the polypeptide exit tunnel.</text>
</comment>
<comment type="subunit">
    <text evidence="1">Part of the 50S ribosomal subunit.</text>
</comment>
<comment type="similarity">
    <text evidence="1">Belongs to the universal ribosomal protein uL4 family.</text>
</comment>
<proteinExistence type="inferred from homology"/>
<evidence type="ECO:0000255" key="1">
    <source>
        <dbReference type="HAMAP-Rule" id="MF_01328"/>
    </source>
</evidence>
<evidence type="ECO:0000256" key="2">
    <source>
        <dbReference type="SAM" id="MobiDB-lite"/>
    </source>
</evidence>
<evidence type="ECO:0000305" key="3"/>